<feature type="signal peptide" evidence="1">
    <location>
        <begin position="1"/>
        <end position="21"/>
    </location>
</feature>
<feature type="chain" id="PRO_5004330046" description="S-protein homolog 32">
    <location>
        <begin position="22"/>
        <end position="130"/>
    </location>
</feature>
<reference key="1">
    <citation type="journal article" date="2000" name="DNA Res.">
        <title>Structural analysis of Arabidopsis thaliana chromosome 3. II. Sequence features of the 4,251,695 bp regions covered by 90 P1, TAC and BAC clones.</title>
        <authorList>
            <person name="Kaneko T."/>
            <person name="Katoh T."/>
            <person name="Sato S."/>
            <person name="Nakamura Y."/>
            <person name="Asamizu E."/>
            <person name="Tabata S."/>
        </authorList>
    </citation>
    <scope>NUCLEOTIDE SEQUENCE [LARGE SCALE GENOMIC DNA]</scope>
    <source>
        <strain>cv. Columbia</strain>
    </source>
</reference>
<reference key="2">
    <citation type="journal article" date="2017" name="Plant J.">
        <title>Araport11: a complete reannotation of the Arabidopsis thaliana reference genome.</title>
        <authorList>
            <person name="Cheng C.Y."/>
            <person name="Krishnakumar V."/>
            <person name="Chan A.P."/>
            <person name="Thibaud-Nissen F."/>
            <person name="Schobel S."/>
            <person name="Town C.D."/>
        </authorList>
    </citation>
    <scope>GENOME REANNOTATION</scope>
    <source>
        <strain>cv. Columbia</strain>
    </source>
</reference>
<reference key="3">
    <citation type="journal article" date="1999" name="Plant Mol. Biol.">
        <title>Analysis of Arabidopsis genome sequence reveals a large new gene family in plants.</title>
        <authorList>
            <person name="Ride J.P."/>
            <person name="Davies E.M."/>
            <person name="Franklin F.C.H."/>
            <person name="Marshall D.F."/>
        </authorList>
    </citation>
    <scope>GENE FAMILY</scope>
    <scope>NOMENCLATURE</scope>
    <source>
        <strain>cv. Columbia</strain>
    </source>
</reference>
<comment type="subcellular location">
    <subcellularLocation>
        <location evidence="4">Secreted</location>
    </subcellularLocation>
</comment>
<comment type="similarity">
    <text evidence="3">Belongs to the plant self-incompatibility (S1) protein family.</text>
</comment>
<accession>Q9LJ82</accession>
<gene>
    <name evidence="2" type="primary">SPH32</name>
    <name evidence="5" type="ordered locus">At3g30714</name>
    <name evidence="6" type="ORF">F21A17.7</name>
</gene>
<keyword id="KW-1185">Reference proteome</keyword>
<keyword id="KW-0964">Secreted</keyword>
<keyword id="KW-0713">Self-incompatibility</keyword>
<keyword id="KW-0732">Signal</keyword>
<protein>
    <recommendedName>
        <fullName evidence="2">S-protein homolog 32</fullName>
    </recommendedName>
</protein>
<organism>
    <name type="scientific">Arabidopsis thaliana</name>
    <name type="common">Mouse-ear cress</name>
    <dbReference type="NCBI Taxonomy" id="3702"/>
    <lineage>
        <taxon>Eukaryota</taxon>
        <taxon>Viridiplantae</taxon>
        <taxon>Streptophyta</taxon>
        <taxon>Embryophyta</taxon>
        <taxon>Tracheophyta</taxon>
        <taxon>Spermatophyta</taxon>
        <taxon>Magnoliopsida</taxon>
        <taxon>eudicotyledons</taxon>
        <taxon>Gunneridae</taxon>
        <taxon>Pentapetalae</taxon>
        <taxon>rosids</taxon>
        <taxon>malvids</taxon>
        <taxon>Brassicales</taxon>
        <taxon>Brassicaceae</taxon>
        <taxon>Camelineae</taxon>
        <taxon>Arabidopsis</taxon>
    </lineage>
</organism>
<sequence length="130" mass="15164">MKYFTIFVFVFSLCMLGHVSGAGIRIVNELKNKKTLWMRCYSKNDVLGPTVIPNGGQFTDYFFHNLFGTTRFMCTLKQGPGFSHSQSFRAFKNSGLWDWRAREDGIYLRRIYKAKFDDGADNLHKEQSWI</sequence>
<evidence type="ECO:0000255" key="1"/>
<evidence type="ECO:0000303" key="2">
    <source>
    </source>
</evidence>
<evidence type="ECO:0000305" key="3"/>
<evidence type="ECO:0000305" key="4">
    <source>
    </source>
</evidence>
<evidence type="ECO:0000312" key="5">
    <source>
        <dbReference type="Araport" id="AT3G30714"/>
    </source>
</evidence>
<evidence type="ECO:0000312" key="6">
    <source>
        <dbReference type="EMBL" id="BAB01206.1"/>
    </source>
</evidence>
<dbReference type="EMBL" id="AP000732">
    <property type="protein sequence ID" value="BAB01206.1"/>
    <property type="molecule type" value="Genomic_DNA"/>
</dbReference>
<dbReference type="EMBL" id="CP002686">
    <property type="status" value="NOT_ANNOTATED_CDS"/>
    <property type="molecule type" value="Genomic_DNA"/>
</dbReference>
<dbReference type="SMR" id="Q9LJ82"/>
<dbReference type="Araport" id="AT3G30714"/>
<dbReference type="TAIR" id="AT3G30714"/>
<dbReference type="InParanoid" id="Q9LJ82"/>
<dbReference type="PRO" id="PR:Q9LJ82"/>
<dbReference type="Proteomes" id="UP000006548">
    <property type="component" value="Chromosome 3"/>
</dbReference>
<dbReference type="ExpressionAtlas" id="Q9LJ82">
    <property type="expression patterns" value="baseline and differential"/>
</dbReference>
<dbReference type="GO" id="GO:0005576">
    <property type="term" value="C:extracellular region"/>
    <property type="evidence" value="ECO:0007669"/>
    <property type="project" value="UniProtKB-SubCell"/>
</dbReference>
<dbReference type="GO" id="GO:0060320">
    <property type="term" value="P:rejection of self pollen"/>
    <property type="evidence" value="ECO:0007669"/>
    <property type="project" value="UniProtKB-KW"/>
</dbReference>
<dbReference type="InterPro" id="IPR010264">
    <property type="entry name" value="Self-incomp_S1"/>
</dbReference>
<dbReference type="PANTHER" id="PTHR31232">
    <property type="match status" value="1"/>
</dbReference>
<dbReference type="PANTHER" id="PTHR31232:SF54">
    <property type="entry name" value="S-PROTEIN HOMOLOG-RELATED"/>
    <property type="match status" value="1"/>
</dbReference>
<dbReference type="Pfam" id="PF05938">
    <property type="entry name" value="Self-incomp_S1"/>
    <property type="match status" value="1"/>
</dbReference>
<name>SPH32_ARATH</name>
<proteinExistence type="inferred from homology"/>